<keyword id="KW-0687">Ribonucleoprotein</keyword>
<keyword id="KW-0689">Ribosomal protein</keyword>
<keyword id="KW-0694">RNA-binding</keyword>
<keyword id="KW-0699">rRNA-binding</keyword>
<comment type="function">
    <text evidence="1">One of the primary rRNA binding proteins, it binds directly to 16S rRNA where it nucleates assembly of the body of the 30S subunit.</text>
</comment>
<comment type="function">
    <text evidence="1">With S5 and S12 plays an important role in translational accuracy.</text>
</comment>
<comment type="subunit">
    <text evidence="1">Part of the 30S ribosomal subunit. Contacts protein S5. The interaction surface between S4 and S5 is involved in control of translational fidelity.</text>
</comment>
<comment type="similarity">
    <text evidence="1">Belongs to the universal ribosomal protein uS4 family.</text>
</comment>
<comment type="sequence caution" evidence="2">
    <conflict type="erroneous initiation">
        <sequence resource="EMBL-CDS" id="ABV84701"/>
    </conflict>
</comment>
<evidence type="ECO:0000255" key="1">
    <source>
        <dbReference type="HAMAP-Rule" id="MF_01306"/>
    </source>
</evidence>
<evidence type="ECO:0000305" key="2"/>
<accession>A8F1B5</accession>
<reference key="1">
    <citation type="journal article" date="2007" name="Genome Res.">
        <title>Lateral gene transfer between obligate intracellular bacteria: evidence from the Rickettsia massiliae genome.</title>
        <authorList>
            <person name="Blanc G."/>
            <person name="Ogata H."/>
            <person name="Robert C."/>
            <person name="Audic S."/>
            <person name="Claverie J.-M."/>
            <person name="Raoult D."/>
        </authorList>
    </citation>
    <scope>NUCLEOTIDE SEQUENCE [LARGE SCALE GENOMIC DNA]</scope>
    <source>
        <strain>Mtu5</strain>
    </source>
</reference>
<feature type="chain" id="PRO_0000322328" description="Small ribosomal subunit protein uS4">
    <location>
        <begin position="1"/>
        <end position="205"/>
    </location>
</feature>
<feature type="domain" description="S4 RNA-binding" evidence="1">
    <location>
        <begin position="94"/>
        <end position="157"/>
    </location>
</feature>
<organism>
    <name type="scientific">Rickettsia massiliae (strain Mtu5)</name>
    <dbReference type="NCBI Taxonomy" id="416276"/>
    <lineage>
        <taxon>Bacteria</taxon>
        <taxon>Pseudomonadati</taxon>
        <taxon>Pseudomonadota</taxon>
        <taxon>Alphaproteobacteria</taxon>
        <taxon>Rickettsiales</taxon>
        <taxon>Rickettsiaceae</taxon>
        <taxon>Rickettsieae</taxon>
        <taxon>Rickettsia</taxon>
        <taxon>spotted fever group</taxon>
    </lineage>
</organism>
<proteinExistence type="inferred from homology"/>
<protein>
    <recommendedName>
        <fullName evidence="1">Small ribosomal subunit protein uS4</fullName>
    </recommendedName>
    <alternativeName>
        <fullName evidence="2">30S ribosomal protein S4</fullName>
    </alternativeName>
</protein>
<gene>
    <name evidence="1" type="primary">rpsD</name>
    <name type="ordered locus">RMA_0484</name>
</gene>
<dbReference type="EMBL" id="CP000683">
    <property type="protein sequence ID" value="ABV84701.1"/>
    <property type="status" value="ALT_INIT"/>
    <property type="molecule type" value="Genomic_DNA"/>
</dbReference>
<dbReference type="RefSeq" id="WP_010977111.1">
    <property type="nucleotide sequence ID" value="NC_009900.1"/>
</dbReference>
<dbReference type="SMR" id="A8F1B5"/>
<dbReference type="GeneID" id="928700"/>
<dbReference type="KEGG" id="rms:RMA_0484"/>
<dbReference type="HOGENOM" id="CLU_092403_0_0_5"/>
<dbReference type="Proteomes" id="UP000001311">
    <property type="component" value="Chromosome"/>
</dbReference>
<dbReference type="GO" id="GO:0015935">
    <property type="term" value="C:small ribosomal subunit"/>
    <property type="evidence" value="ECO:0007669"/>
    <property type="project" value="InterPro"/>
</dbReference>
<dbReference type="GO" id="GO:0019843">
    <property type="term" value="F:rRNA binding"/>
    <property type="evidence" value="ECO:0007669"/>
    <property type="project" value="UniProtKB-UniRule"/>
</dbReference>
<dbReference type="GO" id="GO:0003735">
    <property type="term" value="F:structural constituent of ribosome"/>
    <property type="evidence" value="ECO:0007669"/>
    <property type="project" value="InterPro"/>
</dbReference>
<dbReference type="GO" id="GO:0042274">
    <property type="term" value="P:ribosomal small subunit biogenesis"/>
    <property type="evidence" value="ECO:0007669"/>
    <property type="project" value="TreeGrafter"/>
</dbReference>
<dbReference type="GO" id="GO:0006412">
    <property type="term" value="P:translation"/>
    <property type="evidence" value="ECO:0007669"/>
    <property type="project" value="UniProtKB-UniRule"/>
</dbReference>
<dbReference type="CDD" id="cd00165">
    <property type="entry name" value="S4"/>
    <property type="match status" value="1"/>
</dbReference>
<dbReference type="FunFam" id="3.10.290.10:FF:000001">
    <property type="entry name" value="30S ribosomal protein S4"/>
    <property type="match status" value="1"/>
</dbReference>
<dbReference type="Gene3D" id="1.10.1050.10">
    <property type="entry name" value="Ribosomal Protein S4 Delta 41, Chain A, domain 1"/>
    <property type="match status" value="1"/>
</dbReference>
<dbReference type="Gene3D" id="3.10.290.10">
    <property type="entry name" value="RNA-binding S4 domain"/>
    <property type="match status" value="1"/>
</dbReference>
<dbReference type="HAMAP" id="MF_01306_B">
    <property type="entry name" value="Ribosomal_uS4_B"/>
    <property type="match status" value="1"/>
</dbReference>
<dbReference type="InterPro" id="IPR022801">
    <property type="entry name" value="Ribosomal_uS4"/>
</dbReference>
<dbReference type="InterPro" id="IPR005709">
    <property type="entry name" value="Ribosomal_uS4_bac-type"/>
</dbReference>
<dbReference type="InterPro" id="IPR018079">
    <property type="entry name" value="Ribosomal_uS4_CS"/>
</dbReference>
<dbReference type="InterPro" id="IPR001912">
    <property type="entry name" value="Ribosomal_uS4_N"/>
</dbReference>
<dbReference type="InterPro" id="IPR002942">
    <property type="entry name" value="S4_RNA-bd"/>
</dbReference>
<dbReference type="InterPro" id="IPR036986">
    <property type="entry name" value="S4_RNA-bd_sf"/>
</dbReference>
<dbReference type="NCBIfam" id="NF003717">
    <property type="entry name" value="PRK05327.1"/>
    <property type="match status" value="1"/>
</dbReference>
<dbReference type="NCBIfam" id="TIGR01017">
    <property type="entry name" value="rpsD_bact"/>
    <property type="match status" value="1"/>
</dbReference>
<dbReference type="PANTHER" id="PTHR11831">
    <property type="entry name" value="30S 40S RIBOSOMAL PROTEIN"/>
    <property type="match status" value="1"/>
</dbReference>
<dbReference type="PANTHER" id="PTHR11831:SF4">
    <property type="entry name" value="SMALL RIBOSOMAL SUBUNIT PROTEIN US4M"/>
    <property type="match status" value="1"/>
</dbReference>
<dbReference type="Pfam" id="PF00163">
    <property type="entry name" value="Ribosomal_S4"/>
    <property type="match status" value="1"/>
</dbReference>
<dbReference type="Pfam" id="PF01479">
    <property type="entry name" value="S4"/>
    <property type="match status" value="1"/>
</dbReference>
<dbReference type="SMART" id="SM01390">
    <property type="entry name" value="Ribosomal_S4"/>
    <property type="match status" value="1"/>
</dbReference>
<dbReference type="SMART" id="SM00363">
    <property type="entry name" value="S4"/>
    <property type="match status" value="1"/>
</dbReference>
<dbReference type="SUPFAM" id="SSF55174">
    <property type="entry name" value="Alpha-L RNA-binding motif"/>
    <property type="match status" value="1"/>
</dbReference>
<dbReference type="PROSITE" id="PS00632">
    <property type="entry name" value="RIBOSOMAL_S4"/>
    <property type="match status" value="1"/>
</dbReference>
<dbReference type="PROSITE" id="PS50889">
    <property type="entry name" value="S4"/>
    <property type="match status" value="1"/>
</dbReference>
<sequence length="205" mass="23136">MTKIVRSKYKASRRLGVSLWGDSKDAFNTRNYRPGQHGQNTMIKTSDYGLHLKAKQRLKCHYGRVTEKQFRNIFALAQKMKGNTGENFIGLLESRLDTVVYRMNIAPTIFAARQLVSHGHIKLNGKKADIASIRLKAGDVIEVKESVKQIPLIQESVSKQGQTTPGYLSFDVPSLTGKYLRVPALSDVPYPFEAEVHLVIELYSR</sequence>
<name>RS4_RICM5</name>